<organism>
    <name type="scientific">Sporosarcina pasteurii</name>
    <name type="common">Bacillus pasteurii</name>
    <dbReference type="NCBI Taxonomy" id="1474"/>
    <lineage>
        <taxon>Bacteria</taxon>
        <taxon>Bacillati</taxon>
        <taxon>Bacillota</taxon>
        <taxon>Bacilli</taxon>
        <taxon>Bacillales</taxon>
        <taxon>Caryophanaceae</taxon>
        <taxon>Sporosarcina</taxon>
    </lineage>
</organism>
<comment type="function">
    <text evidence="1">Required for maturation of urease via the functional incorporation of the urease nickel metallocenter.</text>
</comment>
<comment type="subunit">
    <text evidence="1">UreD, UreF and UreG form a complex that acts as a GTP-hydrolysis-dependent molecular chaperone, activating the urease apoprotein by helping to assemble the nickel containing metallocenter of UreC. The UreE protein probably delivers the nickel.</text>
</comment>
<comment type="subcellular location">
    <subcellularLocation>
        <location evidence="1">Cytoplasm</location>
    </subcellularLocation>
</comment>
<comment type="similarity">
    <text evidence="1">Belongs to the UreD family.</text>
</comment>
<accession>Q45347</accession>
<accession>Q93KP8</accession>
<evidence type="ECO:0000255" key="1">
    <source>
        <dbReference type="HAMAP-Rule" id="MF_01384"/>
    </source>
</evidence>
<evidence type="ECO:0000305" key="2"/>
<gene>
    <name evidence="1" type="primary">ureD</name>
</gene>
<feature type="chain" id="PRO_0000067605" description="Urease accessory protein UreD">
    <location>
        <begin position="1"/>
        <end position="257"/>
    </location>
</feature>
<feature type="sequence conflict" description="In Ref. 2; AAA73990." evidence="2" ref="2">
    <original>MWFV</original>
    <variation>WVD</variation>
    <location>
        <begin position="192"/>
        <end position="195"/>
    </location>
</feature>
<feature type="sequence conflict" description="In Ref. 2; AAA73990." evidence="2" ref="2">
    <original>E</original>
    <variation>G</variation>
    <location>
        <position position="200"/>
    </location>
</feature>
<feature type="sequence conflict" description="In Ref. 2; AAA73990." evidence="2" ref="2">
    <original>DIREL</original>
    <variation>RILGS</variation>
    <location>
        <begin position="203"/>
        <end position="207"/>
    </location>
</feature>
<reference key="1">
    <citation type="journal article" date="2002" name="J. Biol. Inorg. Chem.">
        <title>Molecular characterization of Bacillus pasteurii UreE, a metal-binding chaperone for the assembly of the urease active site.</title>
        <authorList>
            <person name="Ciurli S."/>
            <person name="Safarov N."/>
            <person name="Miletti S."/>
            <person name="Dikiy A."/>
            <person name="Christensen S.K."/>
            <person name="Kornetzky K."/>
            <person name="Bryant D.A."/>
            <person name="Vandenberghe I."/>
            <person name="Devreese B."/>
            <person name="Samyn B."/>
            <person name="Remaut H."/>
            <person name="Van Beeumen J."/>
        </authorList>
    </citation>
    <scope>NUCLEOTIDE SEQUENCE [GENOMIC DNA]</scope>
    <source>
        <strain>ATCC 11859 / DSM 33 / NCIB 8841 / NCTC 4822</strain>
    </source>
</reference>
<reference key="2">
    <citation type="journal article" date="1995" name="Mol. Cells">
        <title>Genetic organization and nucleotide sequence of the ure gene cluster in Bacillus pasteurii.</title>
        <authorList>
            <person name="You J.-H."/>
            <person name="Kim J.-G."/>
            <person name="Song B.-H."/>
            <person name="Lee M.-H."/>
            <person name="Kim S.-D."/>
        </authorList>
    </citation>
    <scope>NUCLEOTIDE SEQUENCE [GENOMIC DNA] OF 7-207</scope>
    <source>
        <strain>ATCC 11859 / DSM 33 / NCIB 8841 / NCTC 4822</strain>
    </source>
</reference>
<name>URED_SPOPA</name>
<protein>
    <recommendedName>
        <fullName evidence="1">Urease accessory protein UreD</fullName>
    </recommendedName>
</protein>
<dbReference type="EMBL" id="AF361945">
    <property type="protein sequence ID" value="AAK43720.1"/>
    <property type="molecule type" value="Genomic_DNA"/>
</dbReference>
<dbReference type="EMBL" id="U29368">
    <property type="protein sequence ID" value="AAA73990.1"/>
    <property type="molecule type" value="Genomic_DNA"/>
</dbReference>
<dbReference type="SMR" id="Q45347"/>
<dbReference type="GO" id="GO:0005737">
    <property type="term" value="C:cytoplasm"/>
    <property type="evidence" value="ECO:0007669"/>
    <property type="project" value="UniProtKB-SubCell"/>
</dbReference>
<dbReference type="GO" id="GO:0016151">
    <property type="term" value="F:nickel cation binding"/>
    <property type="evidence" value="ECO:0007669"/>
    <property type="project" value="UniProtKB-UniRule"/>
</dbReference>
<dbReference type="HAMAP" id="MF_01384">
    <property type="entry name" value="UreD"/>
    <property type="match status" value="1"/>
</dbReference>
<dbReference type="InterPro" id="IPR002669">
    <property type="entry name" value="UreD"/>
</dbReference>
<dbReference type="PANTHER" id="PTHR33643">
    <property type="entry name" value="UREASE ACCESSORY PROTEIN D"/>
    <property type="match status" value="1"/>
</dbReference>
<dbReference type="PANTHER" id="PTHR33643:SF1">
    <property type="entry name" value="UREASE ACCESSORY PROTEIN D"/>
    <property type="match status" value="1"/>
</dbReference>
<dbReference type="Pfam" id="PF01774">
    <property type="entry name" value="UreD"/>
    <property type="match status" value="1"/>
</dbReference>
<keyword id="KW-0143">Chaperone</keyword>
<keyword id="KW-0963">Cytoplasm</keyword>
<keyword id="KW-0996">Nickel insertion</keyword>
<proteinExistence type="inferred from homology"/>
<sequence length="257" mass="29291">MEFQYRGNKTVLSNCYQNPPLRASRPLYINPANRSEATVYLVETSGGIVEGDHNVFDIDIKEGADVCLIPQSATKIYPSYNGIWSSQDMDITIGPKASLSFKTEAVIPFEQARFNSKTVIQMTSDSTFLWGDILSPGRVARGEVFEYTDVRTNFQVWMDDECLIYDPLLISKDNMGLKKMGMLEDHLFIGSMWFVTPTIEEFDIRELNERLQESPHSKASASMLEGKAVNVRWLASDLVDLKKEMNRIWDEFANYIV</sequence>